<organism>
    <name type="scientific">Staphylococcus aureus (strain JH1)</name>
    <dbReference type="NCBI Taxonomy" id="359787"/>
    <lineage>
        <taxon>Bacteria</taxon>
        <taxon>Bacillati</taxon>
        <taxon>Bacillota</taxon>
        <taxon>Bacilli</taxon>
        <taxon>Bacillales</taxon>
        <taxon>Staphylococcaceae</taxon>
        <taxon>Staphylococcus</taxon>
    </lineage>
</organism>
<accession>A6U252</accession>
<proteinExistence type="inferred from homology"/>
<feature type="chain" id="PRO_1000079248" description="Chaperone protein DnaK">
    <location>
        <begin position="1"/>
        <end position="610"/>
    </location>
</feature>
<feature type="region of interest" description="Disordered" evidence="2">
    <location>
        <begin position="525"/>
        <end position="544"/>
    </location>
</feature>
<feature type="region of interest" description="Disordered" evidence="2">
    <location>
        <begin position="576"/>
        <end position="610"/>
    </location>
</feature>
<feature type="compositionally biased region" description="Basic and acidic residues" evidence="2">
    <location>
        <begin position="529"/>
        <end position="542"/>
    </location>
</feature>
<feature type="compositionally biased region" description="Low complexity" evidence="2">
    <location>
        <begin position="576"/>
        <end position="592"/>
    </location>
</feature>
<feature type="compositionally biased region" description="Basic and acidic residues" evidence="2">
    <location>
        <begin position="599"/>
        <end position="610"/>
    </location>
</feature>
<feature type="modified residue" description="Phosphothreonine; by autocatalysis" evidence="1">
    <location>
        <position position="173"/>
    </location>
</feature>
<protein>
    <recommendedName>
        <fullName evidence="1">Chaperone protein DnaK</fullName>
    </recommendedName>
    <alternativeName>
        <fullName evidence="1">HSP70</fullName>
    </alternativeName>
    <alternativeName>
        <fullName evidence="1">Heat shock 70 kDa protein</fullName>
    </alternativeName>
    <alternativeName>
        <fullName evidence="1">Heat shock protein 70</fullName>
    </alternativeName>
</protein>
<sequence length="610" mass="66361">MSKIIGIDLGTTNSCVTVLEGDEPKVIQNPEGSRTTPSVVAFKNGETQVGEVAKRQAITNPNTVQSIKRHMGTDYKVDIEGKSYTPQEISAMILQNLKNTAESYLGEKVDKAVITVPAYFNDAERQATKDAGKIAGLEVERIINEPTAAALAYGLDKTDKDEKVLVFDLGGGTFDVSILELGDGVFEVLSTAGDNKLGGDDFDQVIIDYLVAEFKKENGVDLSQDKMALQRLKDAAEKAKKDLSGVSQTQISLPFISAGENGPLHLEVNLTRSKFEELSDSLIRRTMEPTRQAMKDAGLTNSDIDEVILVGGSTRIPAVQEAVKKEIGKEPNKGVNPDEVVAMGAAIQGGVITGDVKDVVLLDVTPLSLGIEILGGRMNTLIERNTTIPTSKSQIYSTAVDNQPSVDVHVLQGERPMAADNKTLGRFQLTDIPPAERGKPQIEVTFDIDKNGIVNVTAKDLGTNKEQRITIQSSSSLSDEEIDRMVKDAEVNAEADKKRREEVDLRNEADSLVFQVEKTLTDLGENIGEEDKKSAEEKKDALKTALEGQDIEDIKSKKEELEKVIQELSAKVYEQAAQQQQQAQGANAGQNNDSTVEDAEFKEVKDDDKK</sequence>
<evidence type="ECO:0000255" key="1">
    <source>
        <dbReference type="HAMAP-Rule" id="MF_00332"/>
    </source>
</evidence>
<evidence type="ECO:0000256" key="2">
    <source>
        <dbReference type="SAM" id="MobiDB-lite"/>
    </source>
</evidence>
<keyword id="KW-0067">ATP-binding</keyword>
<keyword id="KW-0143">Chaperone</keyword>
<keyword id="KW-0547">Nucleotide-binding</keyword>
<keyword id="KW-0597">Phosphoprotein</keyword>
<keyword id="KW-0346">Stress response</keyword>
<dbReference type="EMBL" id="CP000736">
    <property type="protein sequence ID" value="ABR52520.1"/>
    <property type="molecule type" value="Genomic_DNA"/>
</dbReference>
<dbReference type="SMR" id="A6U252"/>
<dbReference type="KEGG" id="sah:SaurJH1_1672"/>
<dbReference type="HOGENOM" id="CLU_005965_2_4_9"/>
<dbReference type="GO" id="GO:0005524">
    <property type="term" value="F:ATP binding"/>
    <property type="evidence" value="ECO:0007669"/>
    <property type="project" value="UniProtKB-UniRule"/>
</dbReference>
<dbReference type="GO" id="GO:0140662">
    <property type="term" value="F:ATP-dependent protein folding chaperone"/>
    <property type="evidence" value="ECO:0007669"/>
    <property type="project" value="InterPro"/>
</dbReference>
<dbReference type="GO" id="GO:0051082">
    <property type="term" value="F:unfolded protein binding"/>
    <property type="evidence" value="ECO:0007669"/>
    <property type="project" value="InterPro"/>
</dbReference>
<dbReference type="CDD" id="cd10234">
    <property type="entry name" value="ASKHA_NBD_HSP70_DnaK-like"/>
    <property type="match status" value="1"/>
</dbReference>
<dbReference type="FunFam" id="2.60.34.10:FF:000014">
    <property type="entry name" value="Chaperone protein DnaK HSP70"/>
    <property type="match status" value="1"/>
</dbReference>
<dbReference type="FunFam" id="1.20.1270.10:FF:000001">
    <property type="entry name" value="Molecular chaperone DnaK"/>
    <property type="match status" value="1"/>
</dbReference>
<dbReference type="FunFam" id="3.30.420.40:FF:000071">
    <property type="entry name" value="Molecular chaperone DnaK"/>
    <property type="match status" value="1"/>
</dbReference>
<dbReference type="FunFam" id="3.90.640.10:FF:000003">
    <property type="entry name" value="Molecular chaperone DnaK"/>
    <property type="match status" value="1"/>
</dbReference>
<dbReference type="Gene3D" id="1.20.1270.10">
    <property type="match status" value="1"/>
</dbReference>
<dbReference type="Gene3D" id="3.30.420.40">
    <property type="match status" value="2"/>
</dbReference>
<dbReference type="Gene3D" id="3.90.640.10">
    <property type="entry name" value="Actin, Chain A, domain 4"/>
    <property type="match status" value="1"/>
</dbReference>
<dbReference type="Gene3D" id="2.60.34.10">
    <property type="entry name" value="Substrate Binding Domain Of DNAk, Chain A, domain 1"/>
    <property type="match status" value="1"/>
</dbReference>
<dbReference type="HAMAP" id="MF_00332">
    <property type="entry name" value="DnaK"/>
    <property type="match status" value="1"/>
</dbReference>
<dbReference type="InterPro" id="IPR043129">
    <property type="entry name" value="ATPase_NBD"/>
</dbReference>
<dbReference type="InterPro" id="IPR012725">
    <property type="entry name" value="Chaperone_DnaK"/>
</dbReference>
<dbReference type="InterPro" id="IPR018181">
    <property type="entry name" value="Heat_shock_70_CS"/>
</dbReference>
<dbReference type="InterPro" id="IPR029048">
    <property type="entry name" value="HSP70_C_sf"/>
</dbReference>
<dbReference type="InterPro" id="IPR029047">
    <property type="entry name" value="HSP70_peptide-bd_sf"/>
</dbReference>
<dbReference type="InterPro" id="IPR013126">
    <property type="entry name" value="Hsp_70_fam"/>
</dbReference>
<dbReference type="NCBIfam" id="NF001413">
    <property type="entry name" value="PRK00290.1"/>
    <property type="match status" value="1"/>
</dbReference>
<dbReference type="NCBIfam" id="TIGR02350">
    <property type="entry name" value="prok_dnaK"/>
    <property type="match status" value="1"/>
</dbReference>
<dbReference type="PANTHER" id="PTHR19375">
    <property type="entry name" value="HEAT SHOCK PROTEIN 70KDA"/>
    <property type="match status" value="1"/>
</dbReference>
<dbReference type="Pfam" id="PF00012">
    <property type="entry name" value="HSP70"/>
    <property type="match status" value="1"/>
</dbReference>
<dbReference type="PRINTS" id="PR00301">
    <property type="entry name" value="HEATSHOCK70"/>
</dbReference>
<dbReference type="SUPFAM" id="SSF53067">
    <property type="entry name" value="Actin-like ATPase domain"/>
    <property type="match status" value="2"/>
</dbReference>
<dbReference type="SUPFAM" id="SSF100934">
    <property type="entry name" value="Heat shock protein 70kD (HSP70), C-terminal subdomain"/>
    <property type="match status" value="1"/>
</dbReference>
<dbReference type="SUPFAM" id="SSF100920">
    <property type="entry name" value="Heat shock protein 70kD (HSP70), peptide-binding domain"/>
    <property type="match status" value="1"/>
</dbReference>
<dbReference type="PROSITE" id="PS00297">
    <property type="entry name" value="HSP70_1"/>
    <property type="match status" value="1"/>
</dbReference>
<dbReference type="PROSITE" id="PS00329">
    <property type="entry name" value="HSP70_2"/>
    <property type="match status" value="1"/>
</dbReference>
<dbReference type="PROSITE" id="PS01036">
    <property type="entry name" value="HSP70_3"/>
    <property type="match status" value="1"/>
</dbReference>
<comment type="function">
    <text evidence="1">Acts as a chaperone.</text>
</comment>
<comment type="induction">
    <text evidence="1">By stress conditions e.g. heat shock.</text>
</comment>
<comment type="similarity">
    <text evidence="1">Belongs to the heat shock protein 70 family.</text>
</comment>
<name>DNAK_STAA2</name>
<reference key="1">
    <citation type="submission" date="2007-06" db="EMBL/GenBank/DDBJ databases">
        <title>Complete sequence of chromosome of Staphylococcus aureus subsp. aureus JH1.</title>
        <authorList>
            <consortium name="US DOE Joint Genome Institute"/>
            <person name="Copeland A."/>
            <person name="Lucas S."/>
            <person name="Lapidus A."/>
            <person name="Barry K."/>
            <person name="Detter J.C."/>
            <person name="Glavina del Rio T."/>
            <person name="Hammon N."/>
            <person name="Israni S."/>
            <person name="Dalin E."/>
            <person name="Tice H."/>
            <person name="Pitluck S."/>
            <person name="Chain P."/>
            <person name="Malfatti S."/>
            <person name="Shin M."/>
            <person name="Vergez L."/>
            <person name="Schmutz J."/>
            <person name="Larimer F."/>
            <person name="Land M."/>
            <person name="Hauser L."/>
            <person name="Kyrpides N."/>
            <person name="Ivanova N."/>
            <person name="Tomasz A."/>
            <person name="Richardson P."/>
        </authorList>
    </citation>
    <scope>NUCLEOTIDE SEQUENCE [LARGE SCALE GENOMIC DNA]</scope>
    <source>
        <strain>JH1</strain>
    </source>
</reference>
<gene>
    <name evidence="1" type="primary">dnaK</name>
    <name type="ordered locus">SaurJH1_1672</name>
</gene>